<proteinExistence type="inferred from homology"/>
<feature type="chain" id="PRO_0000345829" description="tRNA modification GTPase MnmE">
    <location>
        <begin position="1"/>
        <end position="442"/>
    </location>
</feature>
<feature type="domain" description="TrmE-type G">
    <location>
        <begin position="221"/>
        <end position="366"/>
    </location>
</feature>
<feature type="binding site" evidence="1">
    <location>
        <position position="27"/>
    </location>
    <ligand>
        <name>(6S)-5-formyl-5,6,7,8-tetrahydrofolate</name>
        <dbReference type="ChEBI" id="CHEBI:57457"/>
    </ligand>
</feature>
<feature type="binding site" evidence="1">
    <location>
        <position position="84"/>
    </location>
    <ligand>
        <name>(6S)-5-formyl-5,6,7,8-tetrahydrofolate</name>
        <dbReference type="ChEBI" id="CHEBI:57457"/>
    </ligand>
</feature>
<feature type="binding site" evidence="1">
    <location>
        <position position="124"/>
    </location>
    <ligand>
        <name>(6S)-5-formyl-5,6,7,8-tetrahydrofolate</name>
        <dbReference type="ChEBI" id="CHEBI:57457"/>
    </ligand>
</feature>
<feature type="binding site" evidence="1">
    <location>
        <begin position="231"/>
        <end position="236"/>
    </location>
    <ligand>
        <name>GTP</name>
        <dbReference type="ChEBI" id="CHEBI:37565"/>
    </ligand>
</feature>
<feature type="binding site" evidence="1">
    <location>
        <position position="235"/>
    </location>
    <ligand>
        <name>Mg(2+)</name>
        <dbReference type="ChEBI" id="CHEBI:18420"/>
    </ligand>
</feature>
<feature type="binding site" evidence="1">
    <location>
        <begin position="250"/>
        <end position="256"/>
    </location>
    <ligand>
        <name>GTP</name>
        <dbReference type="ChEBI" id="CHEBI:37565"/>
    </ligand>
</feature>
<feature type="binding site" evidence="1">
    <location>
        <position position="256"/>
    </location>
    <ligand>
        <name>Mg(2+)</name>
        <dbReference type="ChEBI" id="CHEBI:18420"/>
    </ligand>
</feature>
<feature type="binding site" evidence="1">
    <location>
        <begin position="275"/>
        <end position="278"/>
    </location>
    <ligand>
        <name>GTP</name>
        <dbReference type="ChEBI" id="CHEBI:37565"/>
    </ligand>
</feature>
<feature type="binding site" evidence="1">
    <location>
        <begin position="329"/>
        <end position="332"/>
    </location>
    <ligand>
        <name>GTP</name>
        <dbReference type="ChEBI" id="CHEBI:37565"/>
    </ligand>
</feature>
<feature type="binding site" evidence="1">
    <location>
        <position position="442"/>
    </location>
    <ligand>
        <name>(6S)-5-formyl-5,6,7,8-tetrahydrofolate</name>
        <dbReference type="ChEBI" id="CHEBI:57457"/>
    </ligand>
</feature>
<keyword id="KW-0963">Cytoplasm</keyword>
<keyword id="KW-0342">GTP-binding</keyword>
<keyword id="KW-0378">Hydrolase</keyword>
<keyword id="KW-0460">Magnesium</keyword>
<keyword id="KW-0479">Metal-binding</keyword>
<keyword id="KW-0547">Nucleotide-binding</keyword>
<keyword id="KW-0630">Potassium</keyword>
<keyword id="KW-0819">tRNA processing</keyword>
<sequence>MPDQIPVRDTIFALSSGSLPSGIAVIRISGADTRAVLERMAGGLSEARFAKLTSIYSAEREVLDRALCLFFPAPASFTGEDCAELHLHGGRAVVAAVLNELAAFPGLRMAEAGEFTKRAFLNGKMNLTEAEALSDLIAAETEAQRRFALVNSSDMRKRLYDGWRRRLIHARAMIEAELDFADESDVPGSAGATVWEDIRRLRQEIVEHASSYRKAEIIRDGFQIVILGAPNAGKSSLLNALARRDVAIVTEEPGTTRDILEVSLDIDGTKVVLADTAGIREAAGRVEALGIERSLRRANEADLVLLLEDVTNPSTPEVPQGKPVITIGNKADLITDTPAASYNCLISAKTGLGLDRLMELISQASAGYSNFAGEILPFRERHVALLGQAADALEAGIDGENIGLELRAECLRLSSLALGRISGEIDVEDLLDAIFSTFCIGK</sequence>
<protein>
    <recommendedName>
        <fullName evidence="1">tRNA modification GTPase MnmE</fullName>
        <ecNumber evidence="1">3.6.-.-</ecNumber>
    </recommendedName>
</protein>
<gene>
    <name evidence="1" type="primary">mnmE</name>
    <name evidence="1" type="synonym">trmE</name>
    <name type="ordered locus">Meso_3472</name>
</gene>
<evidence type="ECO:0000255" key="1">
    <source>
        <dbReference type="HAMAP-Rule" id="MF_00379"/>
    </source>
</evidence>
<accession>Q11CN2</accession>
<dbReference type="EC" id="3.6.-.-" evidence="1"/>
<dbReference type="EMBL" id="CP000390">
    <property type="protein sequence ID" value="ABG64843.1"/>
    <property type="molecule type" value="Genomic_DNA"/>
</dbReference>
<dbReference type="SMR" id="Q11CN2"/>
<dbReference type="STRING" id="266779.Meso_3472"/>
<dbReference type="KEGG" id="mes:Meso_3472"/>
<dbReference type="eggNOG" id="COG0486">
    <property type="taxonomic scope" value="Bacteria"/>
</dbReference>
<dbReference type="HOGENOM" id="CLU_019624_3_1_5"/>
<dbReference type="OrthoDB" id="9805918at2"/>
<dbReference type="GO" id="GO:0005737">
    <property type="term" value="C:cytoplasm"/>
    <property type="evidence" value="ECO:0007669"/>
    <property type="project" value="UniProtKB-SubCell"/>
</dbReference>
<dbReference type="GO" id="GO:0005525">
    <property type="term" value="F:GTP binding"/>
    <property type="evidence" value="ECO:0007669"/>
    <property type="project" value="UniProtKB-UniRule"/>
</dbReference>
<dbReference type="GO" id="GO:0003924">
    <property type="term" value="F:GTPase activity"/>
    <property type="evidence" value="ECO:0007669"/>
    <property type="project" value="UniProtKB-UniRule"/>
</dbReference>
<dbReference type="GO" id="GO:0046872">
    <property type="term" value="F:metal ion binding"/>
    <property type="evidence" value="ECO:0007669"/>
    <property type="project" value="UniProtKB-KW"/>
</dbReference>
<dbReference type="GO" id="GO:0030488">
    <property type="term" value="P:tRNA methylation"/>
    <property type="evidence" value="ECO:0007669"/>
    <property type="project" value="TreeGrafter"/>
</dbReference>
<dbReference type="GO" id="GO:0002098">
    <property type="term" value="P:tRNA wobble uridine modification"/>
    <property type="evidence" value="ECO:0007669"/>
    <property type="project" value="TreeGrafter"/>
</dbReference>
<dbReference type="CDD" id="cd04164">
    <property type="entry name" value="trmE"/>
    <property type="match status" value="1"/>
</dbReference>
<dbReference type="CDD" id="cd14858">
    <property type="entry name" value="TrmE_N"/>
    <property type="match status" value="1"/>
</dbReference>
<dbReference type="FunFam" id="3.30.1360.120:FF:000007">
    <property type="entry name" value="tRNA modification GTPase GTPBP3, mitochondrial"/>
    <property type="match status" value="1"/>
</dbReference>
<dbReference type="Gene3D" id="3.40.50.300">
    <property type="entry name" value="P-loop containing nucleotide triphosphate hydrolases"/>
    <property type="match status" value="1"/>
</dbReference>
<dbReference type="Gene3D" id="3.30.1360.120">
    <property type="entry name" value="Probable tRNA modification gtpase trme, domain 1"/>
    <property type="match status" value="1"/>
</dbReference>
<dbReference type="Gene3D" id="1.20.120.430">
    <property type="entry name" value="tRNA modification GTPase MnmE domain 2"/>
    <property type="match status" value="1"/>
</dbReference>
<dbReference type="HAMAP" id="MF_00379">
    <property type="entry name" value="GTPase_MnmE"/>
    <property type="match status" value="1"/>
</dbReference>
<dbReference type="InterPro" id="IPR031168">
    <property type="entry name" value="G_TrmE"/>
</dbReference>
<dbReference type="InterPro" id="IPR006073">
    <property type="entry name" value="GTP-bd"/>
</dbReference>
<dbReference type="InterPro" id="IPR018948">
    <property type="entry name" value="GTP-bd_TrmE_N"/>
</dbReference>
<dbReference type="InterPro" id="IPR004520">
    <property type="entry name" value="GTPase_MnmE"/>
</dbReference>
<dbReference type="InterPro" id="IPR027368">
    <property type="entry name" value="MnmE_dom2"/>
</dbReference>
<dbReference type="InterPro" id="IPR025867">
    <property type="entry name" value="MnmE_helical"/>
</dbReference>
<dbReference type="InterPro" id="IPR027417">
    <property type="entry name" value="P-loop_NTPase"/>
</dbReference>
<dbReference type="InterPro" id="IPR005225">
    <property type="entry name" value="Small_GTP-bd"/>
</dbReference>
<dbReference type="InterPro" id="IPR027266">
    <property type="entry name" value="TrmE/GcvT_dom1"/>
</dbReference>
<dbReference type="NCBIfam" id="TIGR00450">
    <property type="entry name" value="mnmE_trmE_thdF"/>
    <property type="match status" value="1"/>
</dbReference>
<dbReference type="NCBIfam" id="NF003661">
    <property type="entry name" value="PRK05291.1-3"/>
    <property type="match status" value="1"/>
</dbReference>
<dbReference type="NCBIfam" id="TIGR00231">
    <property type="entry name" value="small_GTP"/>
    <property type="match status" value="1"/>
</dbReference>
<dbReference type="PANTHER" id="PTHR42714">
    <property type="entry name" value="TRNA MODIFICATION GTPASE GTPBP3"/>
    <property type="match status" value="1"/>
</dbReference>
<dbReference type="PANTHER" id="PTHR42714:SF2">
    <property type="entry name" value="TRNA MODIFICATION GTPASE GTPBP3, MITOCHONDRIAL"/>
    <property type="match status" value="1"/>
</dbReference>
<dbReference type="Pfam" id="PF01926">
    <property type="entry name" value="MMR_HSR1"/>
    <property type="match status" value="1"/>
</dbReference>
<dbReference type="Pfam" id="PF12631">
    <property type="entry name" value="MnmE_helical"/>
    <property type="match status" value="1"/>
</dbReference>
<dbReference type="Pfam" id="PF10396">
    <property type="entry name" value="TrmE_N"/>
    <property type="match status" value="1"/>
</dbReference>
<dbReference type="PRINTS" id="PR00449">
    <property type="entry name" value="RASTRNSFRMNG"/>
</dbReference>
<dbReference type="SUPFAM" id="SSF52540">
    <property type="entry name" value="P-loop containing nucleoside triphosphate hydrolases"/>
    <property type="match status" value="1"/>
</dbReference>
<dbReference type="PROSITE" id="PS51709">
    <property type="entry name" value="G_TRME"/>
    <property type="match status" value="1"/>
</dbReference>
<comment type="function">
    <text evidence="1">Exhibits a very high intrinsic GTPase hydrolysis rate. Involved in the addition of a carboxymethylaminomethyl (cmnm) group at the wobble position (U34) of certain tRNAs, forming tRNA-cmnm(5)s(2)U34.</text>
</comment>
<comment type="cofactor">
    <cofactor evidence="1">
        <name>K(+)</name>
        <dbReference type="ChEBI" id="CHEBI:29103"/>
    </cofactor>
    <text evidence="1">Binds 1 potassium ion per subunit.</text>
</comment>
<comment type="subunit">
    <text evidence="1">Homodimer. Heterotetramer of two MnmE and two MnmG subunits.</text>
</comment>
<comment type="subcellular location">
    <subcellularLocation>
        <location evidence="1">Cytoplasm</location>
    </subcellularLocation>
</comment>
<comment type="similarity">
    <text evidence="1">Belongs to the TRAFAC class TrmE-Era-EngA-EngB-Septin-like GTPase superfamily. TrmE GTPase family.</text>
</comment>
<organism>
    <name type="scientific">Chelativorans sp. (strain BNC1)</name>
    <dbReference type="NCBI Taxonomy" id="266779"/>
    <lineage>
        <taxon>Bacteria</taxon>
        <taxon>Pseudomonadati</taxon>
        <taxon>Pseudomonadota</taxon>
        <taxon>Alphaproteobacteria</taxon>
        <taxon>Hyphomicrobiales</taxon>
        <taxon>Phyllobacteriaceae</taxon>
        <taxon>Chelativorans</taxon>
    </lineage>
</organism>
<name>MNME_CHESB</name>
<reference key="1">
    <citation type="submission" date="2006-06" db="EMBL/GenBank/DDBJ databases">
        <title>Complete sequence of chromosome of Mesorhizobium sp. BNC1.</title>
        <authorList>
            <consortium name="US DOE Joint Genome Institute"/>
            <person name="Copeland A."/>
            <person name="Lucas S."/>
            <person name="Lapidus A."/>
            <person name="Barry K."/>
            <person name="Detter J.C."/>
            <person name="Glavina del Rio T."/>
            <person name="Hammon N."/>
            <person name="Israni S."/>
            <person name="Dalin E."/>
            <person name="Tice H."/>
            <person name="Pitluck S."/>
            <person name="Chertkov O."/>
            <person name="Brettin T."/>
            <person name="Bruce D."/>
            <person name="Han C."/>
            <person name="Tapia R."/>
            <person name="Gilna P."/>
            <person name="Schmutz J."/>
            <person name="Larimer F."/>
            <person name="Land M."/>
            <person name="Hauser L."/>
            <person name="Kyrpides N."/>
            <person name="Mikhailova N."/>
            <person name="Richardson P."/>
        </authorList>
    </citation>
    <scope>NUCLEOTIDE SEQUENCE [LARGE SCALE GENOMIC DNA]</scope>
    <source>
        <strain>BNC1</strain>
    </source>
</reference>